<evidence type="ECO:0000255" key="1">
    <source>
        <dbReference type="HAMAP-Rule" id="MF_00203"/>
    </source>
</evidence>
<keyword id="KW-0963">Cytoplasm</keyword>
<keyword id="KW-0227">DNA damage</keyword>
<keyword id="KW-0228">DNA excision</keyword>
<keyword id="KW-0234">DNA repair</keyword>
<keyword id="KW-0267">Excision nuclease</keyword>
<keyword id="KW-0742">SOS response</keyword>
<name>UVRC_BACCQ</name>
<organism>
    <name type="scientific">Bacillus cereus (strain Q1)</name>
    <dbReference type="NCBI Taxonomy" id="361100"/>
    <lineage>
        <taxon>Bacteria</taxon>
        <taxon>Bacillati</taxon>
        <taxon>Bacillota</taxon>
        <taxon>Bacilli</taxon>
        <taxon>Bacillales</taxon>
        <taxon>Bacillaceae</taxon>
        <taxon>Bacillus</taxon>
        <taxon>Bacillus cereus group</taxon>
    </lineage>
</organism>
<sequence length="594" mass="68313">MHEHLKEKLAILPDQPGCYLMKDKQGTVIYVGKAKVLKNRVRSYFTGSHDGKTLRLVGEIVDFEYIVTSSNLEALILELNLIKKHDPKYNIQLKDDKTYPFIKITAEKQPRLLITRNVKKDKGKYFGPYPNAQSAHETKKLLDRMYPLRKCSNMPDKVCLYYHMGQCLAPCVKEVTEEQNKEIVDEIIKFLNGGHKEVRSELETKMYEASEKLEFERAKELRDQIAHIDAIMEKQKMIMSDLVDRDVFGYAVDKGWMCVQVFFVRKGKLIERDVSMFPIYDEPEEGFLTFIGQFYENSSHFKPKEIVVPGSIDSELVERFLEVEATQPKRGKKKDLVELANKNAKIALEEKFYLIERDEERTIKAVENLGEQLGIETPYRIEAFDNSNIQGTNPVSAMIAFIDGKPAKKEYRKYKIKTVQGPDDYESMREVVRRRYTRALKEGLPLPDLIIIDGGKGHLAAASDVLENELGLYIPMAGLVKDDKHKTSHLIIGDPPEPVMLERNSQEFYLLQRIQDEVHRFAITFHRQLHGKSVIQSALDDIPGIGDKRKKILLKHFGSLKKMKEASVTEFVEAGMPKNVAETIYSYLADKKTL</sequence>
<reference key="1">
    <citation type="journal article" date="2009" name="J. Bacteriol.">
        <title>Complete genome sequence of the extremophilic Bacillus cereus strain Q1 with industrial applications.</title>
        <authorList>
            <person name="Xiong Z."/>
            <person name="Jiang Y."/>
            <person name="Qi D."/>
            <person name="Lu H."/>
            <person name="Yang F."/>
            <person name="Yang J."/>
            <person name="Chen L."/>
            <person name="Sun L."/>
            <person name="Xu X."/>
            <person name="Xue Y."/>
            <person name="Zhu Y."/>
            <person name="Jin Q."/>
        </authorList>
    </citation>
    <scope>NUCLEOTIDE SEQUENCE [LARGE SCALE GENOMIC DNA]</scope>
    <source>
        <strain>Q1</strain>
    </source>
</reference>
<feature type="chain" id="PRO_1000200572" description="UvrABC system protein C">
    <location>
        <begin position="1"/>
        <end position="594"/>
    </location>
</feature>
<feature type="domain" description="GIY-YIG" evidence="1">
    <location>
        <begin position="14"/>
        <end position="91"/>
    </location>
</feature>
<feature type="domain" description="UVR" evidence="1">
    <location>
        <begin position="196"/>
        <end position="231"/>
    </location>
</feature>
<protein>
    <recommendedName>
        <fullName evidence="1">UvrABC system protein C</fullName>
        <shortName evidence="1">Protein UvrC</shortName>
    </recommendedName>
    <alternativeName>
        <fullName evidence="1">Excinuclease ABC subunit C</fullName>
    </alternativeName>
</protein>
<gene>
    <name evidence="1" type="primary">uvrC</name>
    <name type="ordered locus">BCQ_4328</name>
</gene>
<comment type="function">
    <text evidence="1">The UvrABC repair system catalyzes the recognition and processing of DNA lesions. UvrC both incises the 5' and 3' sides of the lesion. The N-terminal half is responsible for the 3' incision and the C-terminal half is responsible for the 5' incision.</text>
</comment>
<comment type="subunit">
    <text evidence="1">Interacts with UvrB in an incision complex.</text>
</comment>
<comment type="subcellular location">
    <subcellularLocation>
        <location evidence="1">Cytoplasm</location>
    </subcellularLocation>
</comment>
<comment type="similarity">
    <text evidence="1">Belongs to the UvrC family.</text>
</comment>
<accession>B9J024</accession>
<dbReference type="EMBL" id="CP000227">
    <property type="protein sequence ID" value="ACM14754.1"/>
    <property type="molecule type" value="Genomic_DNA"/>
</dbReference>
<dbReference type="SMR" id="B9J024"/>
<dbReference type="KEGG" id="bcq:BCQ_4328"/>
<dbReference type="HOGENOM" id="CLU_014841_3_2_9"/>
<dbReference type="Proteomes" id="UP000000441">
    <property type="component" value="Chromosome"/>
</dbReference>
<dbReference type="GO" id="GO:0005737">
    <property type="term" value="C:cytoplasm"/>
    <property type="evidence" value="ECO:0007669"/>
    <property type="project" value="UniProtKB-SubCell"/>
</dbReference>
<dbReference type="GO" id="GO:0009380">
    <property type="term" value="C:excinuclease repair complex"/>
    <property type="evidence" value="ECO:0007669"/>
    <property type="project" value="InterPro"/>
</dbReference>
<dbReference type="GO" id="GO:0003677">
    <property type="term" value="F:DNA binding"/>
    <property type="evidence" value="ECO:0007669"/>
    <property type="project" value="UniProtKB-UniRule"/>
</dbReference>
<dbReference type="GO" id="GO:0009381">
    <property type="term" value="F:excinuclease ABC activity"/>
    <property type="evidence" value="ECO:0007669"/>
    <property type="project" value="UniProtKB-UniRule"/>
</dbReference>
<dbReference type="GO" id="GO:0006289">
    <property type="term" value="P:nucleotide-excision repair"/>
    <property type="evidence" value="ECO:0007669"/>
    <property type="project" value="UniProtKB-UniRule"/>
</dbReference>
<dbReference type="GO" id="GO:0009432">
    <property type="term" value="P:SOS response"/>
    <property type="evidence" value="ECO:0007669"/>
    <property type="project" value="UniProtKB-UniRule"/>
</dbReference>
<dbReference type="CDD" id="cd10434">
    <property type="entry name" value="GIY-YIG_UvrC_Cho"/>
    <property type="match status" value="1"/>
</dbReference>
<dbReference type="FunFam" id="1.10.150.20:FF:000005">
    <property type="entry name" value="UvrABC system protein C"/>
    <property type="match status" value="1"/>
</dbReference>
<dbReference type="FunFam" id="3.30.420.340:FF:000002">
    <property type="entry name" value="UvrABC system protein C"/>
    <property type="match status" value="1"/>
</dbReference>
<dbReference type="FunFam" id="3.40.1440.10:FF:000001">
    <property type="entry name" value="UvrABC system protein C"/>
    <property type="match status" value="1"/>
</dbReference>
<dbReference type="FunFam" id="4.10.860.10:FF:000002">
    <property type="entry name" value="UvrABC system protein C"/>
    <property type="match status" value="1"/>
</dbReference>
<dbReference type="Gene3D" id="1.10.150.20">
    <property type="entry name" value="5' to 3' exonuclease, C-terminal subdomain"/>
    <property type="match status" value="1"/>
</dbReference>
<dbReference type="Gene3D" id="3.40.1440.10">
    <property type="entry name" value="GIY-YIG endonuclease"/>
    <property type="match status" value="1"/>
</dbReference>
<dbReference type="Gene3D" id="4.10.860.10">
    <property type="entry name" value="UVR domain"/>
    <property type="match status" value="1"/>
</dbReference>
<dbReference type="Gene3D" id="3.30.420.340">
    <property type="entry name" value="UvrC, RNAse H endonuclease domain"/>
    <property type="match status" value="1"/>
</dbReference>
<dbReference type="HAMAP" id="MF_00203">
    <property type="entry name" value="UvrC"/>
    <property type="match status" value="1"/>
</dbReference>
<dbReference type="InterPro" id="IPR000305">
    <property type="entry name" value="GIY-YIG_endonuc"/>
</dbReference>
<dbReference type="InterPro" id="IPR035901">
    <property type="entry name" value="GIY-YIG_endonuc_sf"/>
</dbReference>
<dbReference type="InterPro" id="IPR047296">
    <property type="entry name" value="GIY-YIG_UvrC_Cho"/>
</dbReference>
<dbReference type="InterPro" id="IPR010994">
    <property type="entry name" value="RuvA_2-like"/>
</dbReference>
<dbReference type="InterPro" id="IPR001943">
    <property type="entry name" value="UVR_dom"/>
</dbReference>
<dbReference type="InterPro" id="IPR036876">
    <property type="entry name" value="UVR_dom_sf"/>
</dbReference>
<dbReference type="InterPro" id="IPR050066">
    <property type="entry name" value="UvrABC_protein_C"/>
</dbReference>
<dbReference type="InterPro" id="IPR004791">
    <property type="entry name" value="UvrC"/>
</dbReference>
<dbReference type="InterPro" id="IPR001162">
    <property type="entry name" value="UvrC_RNase_H_dom"/>
</dbReference>
<dbReference type="InterPro" id="IPR038476">
    <property type="entry name" value="UvrC_RNase_H_dom_sf"/>
</dbReference>
<dbReference type="NCBIfam" id="NF001824">
    <property type="entry name" value="PRK00558.1-5"/>
    <property type="match status" value="1"/>
</dbReference>
<dbReference type="NCBIfam" id="TIGR00194">
    <property type="entry name" value="uvrC"/>
    <property type="match status" value="1"/>
</dbReference>
<dbReference type="PANTHER" id="PTHR30562:SF1">
    <property type="entry name" value="UVRABC SYSTEM PROTEIN C"/>
    <property type="match status" value="1"/>
</dbReference>
<dbReference type="PANTHER" id="PTHR30562">
    <property type="entry name" value="UVRC/OXIDOREDUCTASE"/>
    <property type="match status" value="1"/>
</dbReference>
<dbReference type="Pfam" id="PF01541">
    <property type="entry name" value="GIY-YIG"/>
    <property type="match status" value="1"/>
</dbReference>
<dbReference type="Pfam" id="PF02151">
    <property type="entry name" value="UVR"/>
    <property type="match status" value="1"/>
</dbReference>
<dbReference type="Pfam" id="PF22920">
    <property type="entry name" value="UvrC_RNaseH"/>
    <property type="match status" value="1"/>
</dbReference>
<dbReference type="Pfam" id="PF08459">
    <property type="entry name" value="UvrC_RNaseH_dom"/>
    <property type="match status" value="1"/>
</dbReference>
<dbReference type="SMART" id="SM00465">
    <property type="entry name" value="GIYc"/>
    <property type="match status" value="1"/>
</dbReference>
<dbReference type="SUPFAM" id="SSF46600">
    <property type="entry name" value="C-terminal UvrC-binding domain of UvrB"/>
    <property type="match status" value="1"/>
</dbReference>
<dbReference type="SUPFAM" id="SSF82771">
    <property type="entry name" value="GIY-YIG endonuclease"/>
    <property type="match status" value="1"/>
</dbReference>
<dbReference type="SUPFAM" id="SSF47781">
    <property type="entry name" value="RuvA domain 2-like"/>
    <property type="match status" value="1"/>
</dbReference>
<dbReference type="PROSITE" id="PS50164">
    <property type="entry name" value="GIY_YIG"/>
    <property type="match status" value="1"/>
</dbReference>
<dbReference type="PROSITE" id="PS50151">
    <property type="entry name" value="UVR"/>
    <property type="match status" value="1"/>
</dbReference>
<dbReference type="PROSITE" id="PS50165">
    <property type="entry name" value="UVRC"/>
    <property type="match status" value="1"/>
</dbReference>
<proteinExistence type="inferred from homology"/>